<dbReference type="EC" id="3.6.5.-" evidence="1"/>
<dbReference type="EMBL" id="AE016879">
    <property type="protein sequence ID" value="AAP28372.1"/>
    <property type="molecule type" value="Genomic_DNA"/>
</dbReference>
<dbReference type="EMBL" id="AE017334">
    <property type="protein sequence ID" value="AAT33795.1"/>
    <property type="molecule type" value="Genomic_DNA"/>
</dbReference>
<dbReference type="EMBL" id="AE017225">
    <property type="protein sequence ID" value="AAT56636.1"/>
    <property type="molecule type" value="Genomic_DNA"/>
</dbReference>
<dbReference type="RefSeq" id="NP_846886.1">
    <property type="nucleotide sequence ID" value="NC_003997.3"/>
</dbReference>
<dbReference type="RefSeq" id="YP_030585.1">
    <property type="nucleotide sequence ID" value="NC_005945.1"/>
</dbReference>
<dbReference type="SMR" id="Q81LF0"/>
<dbReference type="STRING" id="261594.GBAA_4672"/>
<dbReference type="DNASU" id="1086852"/>
<dbReference type="GeneID" id="45024313"/>
<dbReference type="KEGG" id="ban:BA_4672"/>
<dbReference type="KEGG" id="banh:HYU01_22785"/>
<dbReference type="KEGG" id="bar:GBAA_4672"/>
<dbReference type="KEGG" id="bat:BAS4338"/>
<dbReference type="PATRIC" id="fig|198094.11.peg.4638"/>
<dbReference type="eggNOG" id="COG0536">
    <property type="taxonomic scope" value="Bacteria"/>
</dbReference>
<dbReference type="HOGENOM" id="CLU_011747_2_1_9"/>
<dbReference type="OMA" id="VVFDWEP"/>
<dbReference type="OrthoDB" id="9807318at2"/>
<dbReference type="Proteomes" id="UP000000427">
    <property type="component" value="Chromosome"/>
</dbReference>
<dbReference type="Proteomes" id="UP000000594">
    <property type="component" value="Chromosome"/>
</dbReference>
<dbReference type="GO" id="GO:0005737">
    <property type="term" value="C:cytoplasm"/>
    <property type="evidence" value="ECO:0007669"/>
    <property type="project" value="UniProtKB-SubCell"/>
</dbReference>
<dbReference type="GO" id="GO:0005525">
    <property type="term" value="F:GTP binding"/>
    <property type="evidence" value="ECO:0007669"/>
    <property type="project" value="UniProtKB-UniRule"/>
</dbReference>
<dbReference type="GO" id="GO:0003924">
    <property type="term" value="F:GTPase activity"/>
    <property type="evidence" value="ECO:0007669"/>
    <property type="project" value="UniProtKB-UniRule"/>
</dbReference>
<dbReference type="GO" id="GO:0000287">
    <property type="term" value="F:magnesium ion binding"/>
    <property type="evidence" value="ECO:0007669"/>
    <property type="project" value="InterPro"/>
</dbReference>
<dbReference type="GO" id="GO:0042254">
    <property type="term" value="P:ribosome biogenesis"/>
    <property type="evidence" value="ECO:0007669"/>
    <property type="project" value="UniProtKB-UniRule"/>
</dbReference>
<dbReference type="CDD" id="cd01898">
    <property type="entry name" value="Obg"/>
    <property type="match status" value="1"/>
</dbReference>
<dbReference type="FunFam" id="2.70.210.12:FF:000001">
    <property type="entry name" value="GTPase Obg"/>
    <property type="match status" value="1"/>
</dbReference>
<dbReference type="FunFam" id="3.40.50.300:FF:000515">
    <property type="entry name" value="GTPase Obg"/>
    <property type="match status" value="1"/>
</dbReference>
<dbReference type="Gene3D" id="3.30.300.350">
    <property type="entry name" value="GTP-binding protein OBG, C-terminal domain"/>
    <property type="match status" value="1"/>
</dbReference>
<dbReference type="Gene3D" id="2.70.210.12">
    <property type="entry name" value="GTP1/OBG domain"/>
    <property type="match status" value="1"/>
</dbReference>
<dbReference type="Gene3D" id="3.40.50.300">
    <property type="entry name" value="P-loop containing nucleotide triphosphate hydrolases"/>
    <property type="match status" value="1"/>
</dbReference>
<dbReference type="HAMAP" id="MF_01454">
    <property type="entry name" value="GTPase_Obg"/>
    <property type="match status" value="1"/>
</dbReference>
<dbReference type="InterPro" id="IPR031167">
    <property type="entry name" value="G_OBG"/>
</dbReference>
<dbReference type="InterPro" id="IPR006073">
    <property type="entry name" value="GTP-bd"/>
</dbReference>
<dbReference type="InterPro" id="IPR014100">
    <property type="entry name" value="GTP-bd_Obg/CgtA"/>
</dbReference>
<dbReference type="InterPro" id="IPR036346">
    <property type="entry name" value="GTP-bd_prot_GTP1/OBG_C_sf"/>
</dbReference>
<dbReference type="InterPro" id="IPR006074">
    <property type="entry name" value="GTP1-OBG_CS"/>
</dbReference>
<dbReference type="InterPro" id="IPR006169">
    <property type="entry name" value="GTP1_OBG_dom"/>
</dbReference>
<dbReference type="InterPro" id="IPR036726">
    <property type="entry name" value="GTP1_OBG_dom_sf"/>
</dbReference>
<dbReference type="InterPro" id="IPR045086">
    <property type="entry name" value="OBG_GTPase"/>
</dbReference>
<dbReference type="InterPro" id="IPR015349">
    <property type="entry name" value="OCT_dom"/>
</dbReference>
<dbReference type="InterPro" id="IPR027417">
    <property type="entry name" value="P-loop_NTPase"/>
</dbReference>
<dbReference type="InterPro" id="IPR005225">
    <property type="entry name" value="Small_GTP-bd"/>
</dbReference>
<dbReference type="NCBIfam" id="TIGR02729">
    <property type="entry name" value="Obg_CgtA"/>
    <property type="match status" value="1"/>
</dbReference>
<dbReference type="NCBIfam" id="TIGR03595">
    <property type="entry name" value="Obg_CgtA_exten"/>
    <property type="match status" value="1"/>
</dbReference>
<dbReference type="NCBIfam" id="NF008954">
    <property type="entry name" value="PRK12296.1"/>
    <property type="match status" value="1"/>
</dbReference>
<dbReference type="NCBIfam" id="NF008955">
    <property type="entry name" value="PRK12297.1"/>
    <property type="match status" value="1"/>
</dbReference>
<dbReference type="NCBIfam" id="NF008956">
    <property type="entry name" value="PRK12299.1"/>
    <property type="match status" value="1"/>
</dbReference>
<dbReference type="NCBIfam" id="TIGR00231">
    <property type="entry name" value="small_GTP"/>
    <property type="match status" value="1"/>
</dbReference>
<dbReference type="PANTHER" id="PTHR11702">
    <property type="entry name" value="DEVELOPMENTALLY REGULATED GTP-BINDING PROTEIN-RELATED"/>
    <property type="match status" value="1"/>
</dbReference>
<dbReference type="PANTHER" id="PTHR11702:SF31">
    <property type="entry name" value="MITOCHONDRIAL RIBOSOME-ASSOCIATED GTPASE 2"/>
    <property type="match status" value="1"/>
</dbReference>
<dbReference type="Pfam" id="PF09269">
    <property type="entry name" value="DUF1967"/>
    <property type="match status" value="1"/>
</dbReference>
<dbReference type="Pfam" id="PF01018">
    <property type="entry name" value="GTP1_OBG"/>
    <property type="match status" value="1"/>
</dbReference>
<dbReference type="Pfam" id="PF01926">
    <property type="entry name" value="MMR_HSR1"/>
    <property type="match status" value="1"/>
</dbReference>
<dbReference type="PIRSF" id="PIRSF002401">
    <property type="entry name" value="GTP_bd_Obg/CgtA"/>
    <property type="match status" value="1"/>
</dbReference>
<dbReference type="PRINTS" id="PR00326">
    <property type="entry name" value="GTP1OBG"/>
</dbReference>
<dbReference type="SUPFAM" id="SSF102741">
    <property type="entry name" value="Obg GTP-binding protein C-terminal domain"/>
    <property type="match status" value="1"/>
</dbReference>
<dbReference type="SUPFAM" id="SSF82051">
    <property type="entry name" value="Obg GTP-binding protein N-terminal domain"/>
    <property type="match status" value="1"/>
</dbReference>
<dbReference type="SUPFAM" id="SSF52540">
    <property type="entry name" value="P-loop containing nucleoside triphosphate hydrolases"/>
    <property type="match status" value="1"/>
</dbReference>
<dbReference type="PROSITE" id="PS51710">
    <property type="entry name" value="G_OBG"/>
    <property type="match status" value="1"/>
</dbReference>
<dbReference type="PROSITE" id="PS00905">
    <property type="entry name" value="GTP1_OBG"/>
    <property type="match status" value="1"/>
</dbReference>
<dbReference type="PROSITE" id="PS51883">
    <property type="entry name" value="OBG"/>
    <property type="match status" value="1"/>
</dbReference>
<dbReference type="PROSITE" id="PS51881">
    <property type="entry name" value="OCT"/>
    <property type="match status" value="1"/>
</dbReference>
<name>OBG_BACAN</name>
<organism>
    <name type="scientific">Bacillus anthracis</name>
    <dbReference type="NCBI Taxonomy" id="1392"/>
    <lineage>
        <taxon>Bacteria</taxon>
        <taxon>Bacillati</taxon>
        <taxon>Bacillota</taxon>
        <taxon>Bacilli</taxon>
        <taxon>Bacillales</taxon>
        <taxon>Bacillaceae</taxon>
        <taxon>Bacillus</taxon>
        <taxon>Bacillus cereus group</taxon>
    </lineage>
</organism>
<comment type="function">
    <text evidence="1">An essential GTPase which binds GTP, GDP and possibly (p)ppGpp with moderate affinity, with high nucleotide exchange rates and a fairly low GTP hydrolysis rate. Plays a role in control of the cell cycle, stress response, ribosome biogenesis and in those bacteria that undergo differentiation, in morphogenesis control.</text>
</comment>
<comment type="cofactor">
    <cofactor evidence="1">
        <name>Mg(2+)</name>
        <dbReference type="ChEBI" id="CHEBI:18420"/>
    </cofactor>
</comment>
<comment type="subunit">
    <text evidence="1">Monomer.</text>
</comment>
<comment type="subcellular location">
    <subcellularLocation>
        <location evidence="1">Cytoplasm</location>
    </subcellularLocation>
</comment>
<comment type="similarity">
    <text evidence="1">Belongs to the TRAFAC class OBG-HflX-like GTPase superfamily. OBG GTPase family.</text>
</comment>
<accession>Q81LF0</accession>
<accession>Q6HSV3</accession>
<accession>Q6KM46</accession>
<keyword id="KW-0963">Cytoplasm</keyword>
<keyword id="KW-0342">GTP-binding</keyword>
<keyword id="KW-0378">Hydrolase</keyword>
<keyword id="KW-0460">Magnesium</keyword>
<keyword id="KW-0479">Metal-binding</keyword>
<keyword id="KW-0547">Nucleotide-binding</keyword>
<keyword id="KW-1185">Reference proteome</keyword>
<gene>
    <name evidence="1" type="primary">obg</name>
    <name type="ordered locus">BA_4672</name>
    <name type="ordered locus">GBAA_4672</name>
    <name type="ordered locus">BAS4338</name>
</gene>
<evidence type="ECO:0000255" key="1">
    <source>
        <dbReference type="HAMAP-Rule" id="MF_01454"/>
    </source>
</evidence>
<evidence type="ECO:0000255" key="2">
    <source>
        <dbReference type="PROSITE-ProRule" id="PRU01229"/>
    </source>
</evidence>
<evidence type="ECO:0000255" key="3">
    <source>
        <dbReference type="PROSITE-ProRule" id="PRU01231"/>
    </source>
</evidence>
<protein>
    <recommendedName>
        <fullName evidence="1">GTPase Obg</fullName>
        <ecNumber evidence="1">3.6.5.-</ecNumber>
    </recommendedName>
    <alternativeName>
        <fullName evidence="1">GTP-binding protein Obg</fullName>
    </alternativeName>
</protein>
<proteinExistence type="inferred from homology"/>
<reference key="1">
    <citation type="journal article" date="2003" name="Nature">
        <title>The genome sequence of Bacillus anthracis Ames and comparison to closely related bacteria.</title>
        <authorList>
            <person name="Read T.D."/>
            <person name="Peterson S.N."/>
            <person name="Tourasse N.J."/>
            <person name="Baillie L.W."/>
            <person name="Paulsen I.T."/>
            <person name="Nelson K.E."/>
            <person name="Tettelin H."/>
            <person name="Fouts D.E."/>
            <person name="Eisen J.A."/>
            <person name="Gill S.R."/>
            <person name="Holtzapple E.K."/>
            <person name="Okstad O.A."/>
            <person name="Helgason E."/>
            <person name="Rilstone J."/>
            <person name="Wu M."/>
            <person name="Kolonay J.F."/>
            <person name="Beanan M.J."/>
            <person name="Dodson R.J."/>
            <person name="Brinkac L.M."/>
            <person name="Gwinn M.L."/>
            <person name="DeBoy R.T."/>
            <person name="Madpu R."/>
            <person name="Daugherty S.C."/>
            <person name="Durkin A.S."/>
            <person name="Haft D.H."/>
            <person name="Nelson W.C."/>
            <person name="Peterson J.D."/>
            <person name="Pop M."/>
            <person name="Khouri H.M."/>
            <person name="Radune D."/>
            <person name="Benton J.L."/>
            <person name="Mahamoud Y."/>
            <person name="Jiang L."/>
            <person name="Hance I.R."/>
            <person name="Weidman J.F."/>
            <person name="Berry K.J."/>
            <person name="Plaut R.D."/>
            <person name="Wolf A.M."/>
            <person name="Watkins K.L."/>
            <person name="Nierman W.C."/>
            <person name="Hazen A."/>
            <person name="Cline R.T."/>
            <person name="Redmond C."/>
            <person name="Thwaite J.E."/>
            <person name="White O."/>
            <person name="Salzberg S.L."/>
            <person name="Thomason B."/>
            <person name="Friedlander A.M."/>
            <person name="Koehler T.M."/>
            <person name="Hanna P.C."/>
            <person name="Kolstoe A.-B."/>
            <person name="Fraser C.M."/>
        </authorList>
    </citation>
    <scope>NUCLEOTIDE SEQUENCE [LARGE SCALE GENOMIC DNA]</scope>
    <source>
        <strain>Ames / isolate Porton</strain>
    </source>
</reference>
<reference key="2">
    <citation type="submission" date="2004-01" db="EMBL/GenBank/DDBJ databases">
        <title>Complete genome sequence of Bacillus anthracis Sterne.</title>
        <authorList>
            <person name="Brettin T.S."/>
            <person name="Bruce D."/>
            <person name="Challacombe J.F."/>
            <person name="Gilna P."/>
            <person name="Han C."/>
            <person name="Hill K."/>
            <person name="Hitchcock P."/>
            <person name="Jackson P."/>
            <person name="Keim P."/>
            <person name="Longmire J."/>
            <person name="Lucas S."/>
            <person name="Okinaka R."/>
            <person name="Richardson P."/>
            <person name="Rubin E."/>
            <person name="Tice H."/>
        </authorList>
    </citation>
    <scope>NUCLEOTIDE SEQUENCE [LARGE SCALE GENOMIC DNA]</scope>
    <source>
        <strain>Sterne</strain>
    </source>
</reference>
<reference key="3">
    <citation type="journal article" date="2009" name="J. Bacteriol.">
        <title>The complete genome sequence of Bacillus anthracis Ames 'Ancestor'.</title>
        <authorList>
            <person name="Ravel J."/>
            <person name="Jiang L."/>
            <person name="Stanley S.T."/>
            <person name="Wilson M.R."/>
            <person name="Decker R.S."/>
            <person name="Read T.D."/>
            <person name="Worsham P."/>
            <person name="Keim P.S."/>
            <person name="Salzberg S.L."/>
            <person name="Fraser-Liggett C.M."/>
            <person name="Rasko D.A."/>
        </authorList>
    </citation>
    <scope>NUCLEOTIDE SEQUENCE [LARGE SCALE GENOMIC DNA]</scope>
    <source>
        <strain>Ames ancestor</strain>
    </source>
</reference>
<feature type="chain" id="PRO_0000385714" description="GTPase Obg">
    <location>
        <begin position="1"/>
        <end position="428"/>
    </location>
</feature>
<feature type="domain" description="Obg" evidence="3">
    <location>
        <begin position="1"/>
        <end position="158"/>
    </location>
</feature>
<feature type="domain" description="OBG-type G" evidence="1">
    <location>
        <begin position="159"/>
        <end position="329"/>
    </location>
</feature>
<feature type="domain" description="OCT" evidence="2">
    <location>
        <begin position="350"/>
        <end position="428"/>
    </location>
</feature>
<feature type="binding site" evidence="1">
    <location>
        <begin position="165"/>
        <end position="172"/>
    </location>
    <ligand>
        <name>GTP</name>
        <dbReference type="ChEBI" id="CHEBI:37565"/>
    </ligand>
</feature>
<feature type="binding site" evidence="1">
    <location>
        <position position="172"/>
    </location>
    <ligand>
        <name>Mg(2+)</name>
        <dbReference type="ChEBI" id="CHEBI:18420"/>
    </ligand>
</feature>
<feature type="binding site" evidence="1">
    <location>
        <begin position="190"/>
        <end position="194"/>
    </location>
    <ligand>
        <name>GTP</name>
        <dbReference type="ChEBI" id="CHEBI:37565"/>
    </ligand>
</feature>
<feature type="binding site" evidence="1">
    <location>
        <position position="192"/>
    </location>
    <ligand>
        <name>Mg(2+)</name>
        <dbReference type="ChEBI" id="CHEBI:18420"/>
    </ligand>
</feature>
<feature type="binding site" evidence="1">
    <location>
        <begin position="212"/>
        <end position="215"/>
    </location>
    <ligand>
        <name>GTP</name>
        <dbReference type="ChEBI" id="CHEBI:37565"/>
    </ligand>
</feature>
<feature type="binding site" evidence="1">
    <location>
        <begin position="282"/>
        <end position="285"/>
    </location>
    <ligand>
        <name>GTP</name>
        <dbReference type="ChEBI" id="CHEBI:37565"/>
    </ligand>
</feature>
<feature type="binding site" evidence="1">
    <location>
        <begin position="310"/>
        <end position="312"/>
    </location>
    <ligand>
        <name>GTP</name>
        <dbReference type="ChEBI" id="CHEBI:37565"/>
    </ligand>
</feature>
<sequence>MFIDQVKIYVKGGDGGNGMVAYRREKYVPKGGPAGGDGGKGADVVFIVEEGLRTLMDFRYQRHFKADRGQHGMSKGQHGRKSEDLLVKVPPGTVVKDEKTGQILADLVTHGQTAVIAKGGRGGRGNSRFATATNPAPEIAENGEPGQERDVILELKVLADVGLVGFPSVGKSTLLSVVSSARPKIAEYHFTTIVPNLGVVETGDNRSFVMADLPGLIEGAHAGVGLGHQFLRHIERTRVIVHVIDMSGLEGRDPYEDYVTINNELKEYNLRLTERPQVVVANKMDMPDAEENLQAFKEKVGDEVKIFPISAVTKQGVRDLLFEVANLIETTPEFPIHEVVDESDTSVMYKFETEGVKFDITRESDGTFVISGYDIEKTFKMTDFSRDESVRRFARQMRGMGIDEALRARGAKDGDIVKILEYEFEFID</sequence>